<comment type="allergen">
    <text>Causes an allergic reaction in human.</text>
</comment>
<comment type="similarity">
    <text evidence="2">Belongs to the BetVI family.</text>
</comment>
<organism>
    <name type="scientific">Alnus glutinosa</name>
    <name type="common">European alder</name>
    <name type="synonym">Betula alnus var. glutinosa</name>
    <dbReference type="NCBI Taxonomy" id="3517"/>
    <lineage>
        <taxon>Eukaryota</taxon>
        <taxon>Viridiplantae</taxon>
        <taxon>Streptophyta</taxon>
        <taxon>Embryophyta</taxon>
        <taxon>Tracheophyta</taxon>
        <taxon>Spermatophyta</taxon>
        <taxon>Magnoliopsida</taxon>
        <taxon>eudicotyledons</taxon>
        <taxon>Gunneridae</taxon>
        <taxon>Pentapetalae</taxon>
        <taxon>rosids</taxon>
        <taxon>fabids</taxon>
        <taxon>Fagales</taxon>
        <taxon>Betulaceae</taxon>
        <taxon>Alnus</taxon>
    </lineage>
</organism>
<reference key="1">
    <citation type="journal article" date="1992" name="J. Allergy Clin. Immunol.">
        <title>Complementary DNA cloning and expression in Escherichia coli of Aln g I, the major allergen in pollen of alder (Alnus glutinosa).</title>
        <authorList>
            <person name="Breiteneder H."/>
            <person name="Ferreira F."/>
            <person name="Reikerstorfer A."/>
            <person name="Duchene M."/>
            <person name="Valenta R."/>
            <person name="Hoffmann-Sommergruber K."/>
            <person name="Ebner C."/>
            <person name="Breitenbach M."/>
            <person name="Kraft D."/>
            <person name="Scheiner O."/>
        </authorList>
    </citation>
    <scope>NUCLEOTIDE SEQUENCE [MRNA]</scope>
    <source>
        <tissue>Pollen</tissue>
    </source>
</reference>
<evidence type="ECO:0000250" key="1"/>
<evidence type="ECO:0000305" key="2"/>
<keyword id="KW-0020">Allergen</keyword>
<keyword id="KW-0568">Pathogenesis-related protein</keyword>
<keyword id="KW-0611">Plant defense</keyword>
<sequence>MGVFNYEAETPSVIPAARLFKAFILDGDKLLPKVAPEAVSSVENIEGNGGPGTIKKITFPEGSPFKYVKERVDEVDRVNFKYSFSVIEGGAVGDALEKVCNEIKIVAAPDGGSILKISNKFHTKGDHEINAEQIKIEKEKAVGLLKAVESYLLAHSDAYN</sequence>
<protein>
    <recommendedName>
        <fullName>Major pollen allergen Aln g 1</fullName>
    </recommendedName>
    <alternativeName>
        <fullName>Allergen Aln g I</fullName>
    </alternativeName>
    <allergenName>Aln g 1</allergenName>
</protein>
<feature type="initiator methionine" description="Removed" evidence="1">
    <location>
        <position position="1"/>
    </location>
</feature>
<feature type="chain" id="PRO_0000154171" description="Major pollen allergen Aln g 1">
    <location>
        <begin position="2"/>
        <end position="160"/>
    </location>
</feature>
<name>MPAG1_ALNGL</name>
<dbReference type="EMBL" id="S50892">
    <property type="protein sequence ID" value="AAB24432.1"/>
    <property type="molecule type" value="mRNA"/>
</dbReference>
<dbReference type="SMR" id="P38948"/>
<dbReference type="Allergome" id="3055">
    <property type="allergen name" value="Aln g 1.0101"/>
</dbReference>
<dbReference type="Allergome" id="7">
    <property type="allergen name" value="Aln g 1"/>
</dbReference>
<dbReference type="ABCD" id="P38948">
    <property type="antibodies" value="1 sequenced antibody"/>
</dbReference>
<dbReference type="GO" id="GO:0005737">
    <property type="term" value="C:cytoplasm"/>
    <property type="evidence" value="ECO:0007669"/>
    <property type="project" value="TreeGrafter"/>
</dbReference>
<dbReference type="GO" id="GO:0005634">
    <property type="term" value="C:nucleus"/>
    <property type="evidence" value="ECO:0007669"/>
    <property type="project" value="TreeGrafter"/>
</dbReference>
<dbReference type="GO" id="GO:0010427">
    <property type="term" value="F:abscisic acid binding"/>
    <property type="evidence" value="ECO:0007669"/>
    <property type="project" value="InterPro"/>
</dbReference>
<dbReference type="GO" id="GO:0004864">
    <property type="term" value="F:protein phosphatase inhibitor activity"/>
    <property type="evidence" value="ECO:0007669"/>
    <property type="project" value="InterPro"/>
</dbReference>
<dbReference type="GO" id="GO:0038023">
    <property type="term" value="F:signaling receptor activity"/>
    <property type="evidence" value="ECO:0007669"/>
    <property type="project" value="InterPro"/>
</dbReference>
<dbReference type="GO" id="GO:0009738">
    <property type="term" value="P:abscisic acid-activated signaling pathway"/>
    <property type="evidence" value="ECO:0007669"/>
    <property type="project" value="InterPro"/>
</dbReference>
<dbReference type="GO" id="GO:0006952">
    <property type="term" value="P:defense response"/>
    <property type="evidence" value="ECO:0007669"/>
    <property type="project" value="UniProtKB-KW"/>
</dbReference>
<dbReference type="CDD" id="cd07816">
    <property type="entry name" value="Bet_v1-like"/>
    <property type="match status" value="1"/>
</dbReference>
<dbReference type="FunFam" id="3.30.530.20:FF:000007">
    <property type="entry name" value="Major pollen allergen Bet v 1-A"/>
    <property type="match status" value="1"/>
</dbReference>
<dbReference type="Gene3D" id="3.30.530.20">
    <property type="match status" value="1"/>
</dbReference>
<dbReference type="InterPro" id="IPR000916">
    <property type="entry name" value="Bet_v_I/MLP"/>
</dbReference>
<dbReference type="InterPro" id="IPR024949">
    <property type="entry name" value="Bet_v_I_allergen"/>
</dbReference>
<dbReference type="InterPro" id="IPR050279">
    <property type="entry name" value="Plant_def-hormone_signal"/>
</dbReference>
<dbReference type="InterPro" id="IPR023393">
    <property type="entry name" value="START-like_dom_sf"/>
</dbReference>
<dbReference type="PANTHER" id="PTHR31213">
    <property type="entry name" value="OS08G0374000 PROTEIN-RELATED"/>
    <property type="match status" value="1"/>
</dbReference>
<dbReference type="PANTHER" id="PTHR31213:SF55">
    <property type="entry name" value="STRESS-INDUCED PROTEIN SAM22"/>
    <property type="match status" value="1"/>
</dbReference>
<dbReference type="Pfam" id="PF00407">
    <property type="entry name" value="Bet_v_1"/>
    <property type="match status" value="1"/>
</dbReference>
<dbReference type="PRINTS" id="PR00634">
    <property type="entry name" value="BETALLERGEN"/>
</dbReference>
<dbReference type="SUPFAM" id="SSF55961">
    <property type="entry name" value="Bet v1-like"/>
    <property type="match status" value="1"/>
</dbReference>
<dbReference type="PROSITE" id="PS00451">
    <property type="entry name" value="PATHOGENESIS_BETVI"/>
    <property type="match status" value="1"/>
</dbReference>
<accession>P38948</accession>
<proteinExistence type="evidence at protein level"/>